<gene>
    <name type="primary">merA</name>
</gene>
<keyword id="KW-1015">Disulfide bond</keyword>
<keyword id="KW-0274">FAD</keyword>
<keyword id="KW-0285">Flavoprotein</keyword>
<keyword id="KW-0475">Mercuric resistance</keyword>
<keyword id="KW-0476">Mercury</keyword>
<keyword id="KW-0479">Metal-binding</keyword>
<keyword id="KW-0521">NADP</keyword>
<keyword id="KW-0560">Oxidoreductase</keyword>
<keyword id="KW-0614">Plasmid</keyword>
<keyword id="KW-0676">Redox-active center</keyword>
<accession>Q51772</accession>
<protein>
    <recommendedName>
        <fullName>Mercuric reductase</fullName>
        <ecNumber evidence="1">1.16.1.1</ecNumber>
    </recommendedName>
    <alternativeName>
        <fullName>Hg(II) reductase</fullName>
    </alternativeName>
</protein>
<dbReference type="EC" id="1.16.1.1" evidence="1"/>
<dbReference type="EMBL" id="X73112">
    <property type="protein sequence ID" value="CAA51542.1"/>
    <property type="molecule type" value="Genomic_DNA"/>
</dbReference>
<dbReference type="SMR" id="Q51772"/>
<dbReference type="GO" id="GO:0050660">
    <property type="term" value="F:flavin adenine dinucleotide binding"/>
    <property type="evidence" value="ECO:0007669"/>
    <property type="project" value="InterPro"/>
</dbReference>
<dbReference type="GO" id="GO:0016152">
    <property type="term" value="F:mercury (II) reductase (NADP+) activity"/>
    <property type="evidence" value="ECO:0007669"/>
    <property type="project" value="UniProtKB-EC"/>
</dbReference>
<dbReference type="GO" id="GO:0045340">
    <property type="term" value="F:mercury ion binding"/>
    <property type="evidence" value="ECO:0007669"/>
    <property type="project" value="InterPro"/>
</dbReference>
<dbReference type="GO" id="GO:0003955">
    <property type="term" value="F:NAD(P)H dehydrogenase (quinone) activity"/>
    <property type="evidence" value="ECO:0007669"/>
    <property type="project" value="TreeGrafter"/>
</dbReference>
<dbReference type="GO" id="GO:0050661">
    <property type="term" value="F:NADP binding"/>
    <property type="evidence" value="ECO:0007669"/>
    <property type="project" value="InterPro"/>
</dbReference>
<dbReference type="GO" id="GO:0016668">
    <property type="term" value="F:oxidoreductase activity, acting on a sulfur group of donors, NAD(P) as acceptor"/>
    <property type="evidence" value="ECO:0007669"/>
    <property type="project" value="InterPro"/>
</dbReference>
<dbReference type="GO" id="GO:0050787">
    <property type="term" value="P:detoxification of mercury ion"/>
    <property type="evidence" value="ECO:0007669"/>
    <property type="project" value="InterPro"/>
</dbReference>
<dbReference type="CDD" id="cd00371">
    <property type="entry name" value="HMA"/>
    <property type="match status" value="1"/>
</dbReference>
<dbReference type="FunFam" id="3.30.390.30:FF:000001">
    <property type="entry name" value="Dihydrolipoyl dehydrogenase"/>
    <property type="match status" value="1"/>
</dbReference>
<dbReference type="Gene3D" id="3.30.390.30">
    <property type="match status" value="1"/>
</dbReference>
<dbReference type="Gene3D" id="3.30.70.100">
    <property type="match status" value="1"/>
</dbReference>
<dbReference type="Gene3D" id="3.50.50.60">
    <property type="entry name" value="FAD/NAD(P)-binding domain"/>
    <property type="match status" value="2"/>
</dbReference>
<dbReference type="InterPro" id="IPR036188">
    <property type="entry name" value="FAD/NAD-bd_sf"/>
</dbReference>
<dbReference type="InterPro" id="IPR023753">
    <property type="entry name" value="FAD/NAD-binding_dom"/>
</dbReference>
<dbReference type="InterPro" id="IPR016156">
    <property type="entry name" value="FAD/NAD-linked_Rdtase_dimer_sf"/>
</dbReference>
<dbReference type="InterPro" id="IPR017969">
    <property type="entry name" value="Heavy-metal-associated_CS"/>
</dbReference>
<dbReference type="InterPro" id="IPR006121">
    <property type="entry name" value="HMA_dom"/>
</dbReference>
<dbReference type="InterPro" id="IPR036163">
    <property type="entry name" value="HMA_dom_sf"/>
</dbReference>
<dbReference type="InterPro" id="IPR021179">
    <property type="entry name" value="Mercury_reductase_MerA"/>
</dbReference>
<dbReference type="InterPro" id="IPR001100">
    <property type="entry name" value="Pyr_nuc-diS_OxRdtase"/>
</dbReference>
<dbReference type="InterPro" id="IPR004099">
    <property type="entry name" value="Pyr_nucl-diS_OxRdtase_dimer"/>
</dbReference>
<dbReference type="InterPro" id="IPR012999">
    <property type="entry name" value="Pyr_OxRdtase_I_AS"/>
</dbReference>
<dbReference type="NCBIfam" id="TIGR02053">
    <property type="entry name" value="MerA"/>
    <property type="match status" value="1"/>
</dbReference>
<dbReference type="NCBIfam" id="NF010311">
    <property type="entry name" value="PRK13748.1"/>
    <property type="match status" value="1"/>
</dbReference>
<dbReference type="PANTHER" id="PTHR43014">
    <property type="entry name" value="MERCURIC REDUCTASE"/>
    <property type="match status" value="1"/>
</dbReference>
<dbReference type="PANTHER" id="PTHR43014:SF2">
    <property type="entry name" value="MERCURIC REDUCTASE"/>
    <property type="match status" value="1"/>
</dbReference>
<dbReference type="Pfam" id="PF00403">
    <property type="entry name" value="HMA"/>
    <property type="match status" value="1"/>
</dbReference>
<dbReference type="Pfam" id="PF07992">
    <property type="entry name" value="Pyr_redox_2"/>
    <property type="match status" value="1"/>
</dbReference>
<dbReference type="Pfam" id="PF02852">
    <property type="entry name" value="Pyr_redox_dim"/>
    <property type="match status" value="1"/>
</dbReference>
<dbReference type="PIRSF" id="PIRSF000350">
    <property type="entry name" value="Mercury_reductase_MerA"/>
    <property type="match status" value="1"/>
</dbReference>
<dbReference type="PRINTS" id="PR00945">
    <property type="entry name" value="HGRDTASE"/>
</dbReference>
<dbReference type="SUPFAM" id="SSF51905">
    <property type="entry name" value="FAD/NAD(P)-binding domain"/>
    <property type="match status" value="1"/>
</dbReference>
<dbReference type="SUPFAM" id="SSF55424">
    <property type="entry name" value="FAD/NAD-linked reductases, dimerisation (C-terminal) domain"/>
    <property type="match status" value="1"/>
</dbReference>
<dbReference type="SUPFAM" id="SSF55008">
    <property type="entry name" value="HMA, heavy metal-associated domain"/>
    <property type="match status" value="1"/>
</dbReference>
<dbReference type="PROSITE" id="PS01047">
    <property type="entry name" value="HMA_1"/>
    <property type="match status" value="1"/>
</dbReference>
<dbReference type="PROSITE" id="PS50846">
    <property type="entry name" value="HMA_2"/>
    <property type="match status" value="1"/>
</dbReference>
<dbReference type="PROSITE" id="PS00076">
    <property type="entry name" value="PYRIDINE_REDOX_1"/>
    <property type="match status" value="1"/>
</dbReference>
<sequence length="548" mass="57567">MTEITVNGMTCTSCATHVKDALEKIPGVNAAVVSYPESRAQVMADTAVSHNQLLAAIAALGYQGSIRVGDFKDEPKIRDALEGAGLHIAIIGSGGAAMAAALKAVEQGATVTLIERGTIGGTCVNIGCVPSKIMIRAAHIAHLRRESPFDGGIAATVPAIDRSKLLAQQQARVDELRHAKYEGILDGNPAITVLHGEARFKDDQSLVVRLNEGGEREVTFDRCLVATGASPAVPPIPGLKESPYWTSTEALVSDTIPARLAVIGSSVVALELAQAFARLGSQVTILARSTLFFREDPAIGEAVTAAFRAEGIEVLEHTQASQVAHVNGEFVLTTGHGELRADKLLVATGRAPNTRSLALDAPGVTVNAQGAIVIDQGMRTSNPNIYAAGDCTDQPQFVYVAAAAGTRAAINMTGGDRALNLTAMPAVVFTDPQVATVGYSEAEAHHDGIETDSRTLTLDNVPRALANFDTRGFIKLVIEEGSGRLIGVQAVAPEAGELIQTAVLAIRNRMTVQELADQLFPYLTMVEGLKLAAQTFNKDVKQLSCCAG</sequence>
<reference key="1">
    <citation type="journal article" date="1994" name="Gene">
        <title>The sequence of the mer operon of pMER327/419 and transposon ends of pMER327/419, 330 and 05.</title>
        <authorList>
            <person name="Hobman J."/>
            <person name="Kholodii G."/>
            <person name="Nikiforov V."/>
            <person name="Ritchie D.A."/>
            <person name="Strike P."/>
            <person name="Yurieva O."/>
        </authorList>
    </citation>
    <scope>NUCLEOTIDE SEQUENCE [GENOMIC DNA]</scope>
</reference>
<comment type="function">
    <text evidence="1">Resistance to Hg(2+) in bacteria appears to be governed by a specialized system which includes mercuric reductase. MerA protein is responsible for volatilizing mercury as Hg(0).</text>
</comment>
<comment type="catalytic activity">
    <reaction evidence="1">
        <text>Hg + NADP(+) + H(+) = Hg(2+) + NADPH</text>
        <dbReference type="Rhea" id="RHEA:23856"/>
        <dbReference type="ChEBI" id="CHEBI:15378"/>
        <dbReference type="ChEBI" id="CHEBI:16170"/>
        <dbReference type="ChEBI" id="CHEBI:16793"/>
        <dbReference type="ChEBI" id="CHEBI:57783"/>
        <dbReference type="ChEBI" id="CHEBI:58349"/>
        <dbReference type="EC" id="1.16.1.1"/>
    </reaction>
</comment>
<comment type="cofactor">
    <cofactor evidence="1">
        <name>FAD</name>
        <dbReference type="ChEBI" id="CHEBI:57692"/>
    </cofactor>
    <text evidence="1">Binds 1 FAD per subunit.</text>
</comment>
<comment type="subunit">
    <text evidence="1">Homodimer.</text>
</comment>
<comment type="miscellaneous">
    <text evidence="1">The active site is a redox-active disulfide bond.</text>
</comment>
<comment type="similarity">
    <text evidence="3">Belongs to the class-I pyridine nucleotide-disulfide oxidoreductase family.</text>
</comment>
<organism>
    <name type="scientific">Pseudomonas fluorescens</name>
    <dbReference type="NCBI Taxonomy" id="294"/>
    <lineage>
        <taxon>Bacteria</taxon>
        <taxon>Pseudomonadati</taxon>
        <taxon>Pseudomonadota</taxon>
        <taxon>Gammaproteobacteria</taxon>
        <taxon>Pseudomonadales</taxon>
        <taxon>Pseudomonadaceae</taxon>
        <taxon>Pseudomonas</taxon>
    </lineage>
</organism>
<name>MERA_PSEFL</name>
<evidence type="ECO:0000250" key="1">
    <source>
        <dbReference type="UniProtKB" id="P00392"/>
    </source>
</evidence>
<evidence type="ECO:0000255" key="2">
    <source>
        <dbReference type="PROSITE-ProRule" id="PRU00280"/>
    </source>
</evidence>
<evidence type="ECO:0000305" key="3"/>
<feature type="chain" id="PRO_0000067998" description="Mercuric reductase">
    <location>
        <begin position="1"/>
        <end position="548"/>
    </location>
</feature>
<feature type="domain" description="HMA" evidence="2">
    <location>
        <begin position="1"/>
        <end position="65"/>
    </location>
</feature>
<feature type="binding site" evidence="2">
    <location>
        <position position="11"/>
    </location>
    <ligand>
        <name>a metal cation</name>
        <dbReference type="ChEBI" id="CHEBI:25213"/>
    </ligand>
</feature>
<feature type="binding site" evidence="2">
    <location>
        <position position="14"/>
    </location>
    <ligand>
        <name>a metal cation</name>
        <dbReference type="ChEBI" id="CHEBI:25213"/>
    </ligand>
</feature>
<feature type="binding site" evidence="1">
    <location>
        <position position="97"/>
    </location>
    <ligand>
        <name>FAD</name>
        <dbReference type="ChEBI" id="CHEBI:57692"/>
    </ligand>
</feature>
<feature type="binding site" evidence="1">
    <location>
        <position position="117"/>
    </location>
    <ligand>
        <name>FAD</name>
        <dbReference type="ChEBI" id="CHEBI:57692"/>
    </ligand>
</feature>
<feature type="binding site" evidence="1">
    <location>
        <position position="122"/>
    </location>
    <ligand>
        <name>FAD</name>
        <dbReference type="ChEBI" id="CHEBI:57692"/>
    </ligand>
</feature>
<feature type="binding site" evidence="1">
    <location>
        <position position="132"/>
    </location>
    <ligand>
        <name>FAD</name>
        <dbReference type="ChEBI" id="CHEBI:57692"/>
    </ligand>
</feature>
<feature type="binding site" evidence="1">
    <location>
        <position position="198"/>
    </location>
    <ligand>
        <name>FAD</name>
        <dbReference type="ChEBI" id="CHEBI:57692"/>
    </ligand>
</feature>
<feature type="binding site" evidence="1">
    <location>
        <position position="390"/>
    </location>
    <ligand>
        <name>FAD</name>
        <dbReference type="ChEBI" id="CHEBI:57692"/>
    </ligand>
</feature>
<feature type="binding site" evidence="1">
    <location>
        <position position="398"/>
    </location>
    <ligand>
        <name>FAD</name>
        <dbReference type="ChEBI" id="CHEBI:57692"/>
    </ligand>
</feature>
<feature type="binding site" evidence="1">
    <location>
        <position position="545"/>
    </location>
    <ligand>
        <name>Hg(2+)</name>
        <dbReference type="ChEBI" id="CHEBI:16793"/>
    </ligand>
</feature>
<feature type="binding site" evidence="1">
    <location>
        <position position="546"/>
    </location>
    <ligand>
        <name>Hg(2+)</name>
        <dbReference type="ChEBI" id="CHEBI:16793"/>
    </ligand>
</feature>
<feature type="disulfide bond" description="Redox-active" evidence="1">
    <location>
        <begin position="123"/>
        <end position="128"/>
    </location>
</feature>
<proteinExistence type="inferred from homology"/>
<geneLocation type="plasmid">
    <name>pMER327</name>
</geneLocation>